<protein>
    <recommendedName>
        <fullName evidence="1">Cation-efflux pump FieF</fullName>
    </recommendedName>
</protein>
<gene>
    <name evidence="1" type="primary">fieF</name>
    <name type="ordered locus">YPTB0073</name>
</gene>
<accession>Q66GA9</accession>
<organism>
    <name type="scientific">Yersinia pseudotuberculosis serotype I (strain IP32953)</name>
    <dbReference type="NCBI Taxonomy" id="273123"/>
    <lineage>
        <taxon>Bacteria</taxon>
        <taxon>Pseudomonadati</taxon>
        <taxon>Pseudomonadota</taxon>
        <taxon>Gammaproteobacteria</taxon>
        <taxon>Enterobacterales</taxon>
        <taxon>Yersiniaceae</taxon>
        <taxon>Yersinia</taxon>
    </lineage>
</organism>
<comment type="function">
    <text evidence="1">Divalent metal cation transporter which exports Zn(2+), Cd(2+) and possibly Fe(2+). May be involved in zinc and iron detoxification by efflux.</text>
</comment>
<comment type="catalytic activity">
    <reaction evidence="1">
        <text>Zn(2+)(in) + H(+)(out) = Zn(2+)(out) + H(+)(in)</text>
        <dbReference type="Rhea" id="RHEA:28839"/>
        <dbReference type="ChEBI" id="CHEBI:15378"/>
        <dbReference type="ChEBI" id="CHEBI:29105"/>
    </reaction>
</comment>
<comment type="catalytic activity">
    <reaction evidence="1">
        <text>Cd(2+)(in) + H(+)(out) = Cd(2+)(out) + H(+)(in)</text>
        <dbReference type="Rhea" id="RHEA:28739"/>
        <dbReference type="ChEBI" id="CHEBI:15378"/>
        <dbReference type="ChEBI" id="CHEBI:48775"/>
    </reaction>
</comment>
<comment type="catalytic activity">
    <reaction evidence="1">
        <text>Fe(2+)(in) + H(+)(out) = Fe(2+)(out) + H(+)(in)</text>
        <dbReference type="Rhea" id="RHEA:29439"/>
        <dbReference type="ChEBI" id="CHEBI:15378"/>
        <dbReference type="ChEBI" id="CHEBI:29033"/>
    </reaction>
</comment>
<comment type="subunit">
    <text evidence="1">Homodimer.</text>
</comment>
<comment type="subcellular location">
    <subcellularLocation>
        <location evidence="1">Cell inner membrane</location>
        <topology evidence="1">Multi-pass membrane protein</topology>
    </subcellularLocation>
</comment>
<comment type="similarity">
    <text evidence="1">Belongs to the cation diffusion facilitator (CDF) transporter (TC 2.A.4) family. FieF subfamily.</text>
</comment>
<feature type="chain" id="PRO_0000206134" description="Cation-efflux pump FieF">
    <location>
        <begin position="1"/>
        <end position="300"/>
    </location>
</feature>
<feature type="transmembrane region" description="Helical" evidence="1">
    <location>
        <begin position="12"/>
        <end position="32"/>
    </location>
</feature>
<feature type="transmembrane region" description="Helical" evidence="1">
    <location>
        <begin position="40"/>
        <end position="60"/>
    </location>
</feature>
<feature type="transmembrane region" description="Helical" evidence="1">
    <location>
        <begin position="82"/>
        <end position="102"/>
    </location>
</feature>
<feature type="transmembrane region" description="Helical" evidence="1">
    <location>
        <begin position="114"/>
        <end position="134"/>
    </location>
</feature>
<feature type="transmembrane region" description="Helical" evidence="1">
    <location>
        <begin position="155"/>
        <end position="175"/>
    </location>
</feature>
<feature type="transmembrane region" description="Helical" evidence="1">
    <location>
        <begin position="178"/>
        <end position="198"/>
    </location>
</feature>
<feature type="binding site" evidence="1">
    <location>
        <position position="45"/>
    </location>
    <ligand>
        <name>Zn(2+)</name>
        <dbReference type="ChEBI" id="CHEBI:29105"/>
    </ligand>
</feature>
<feature type="binding site" evidence="1">
    <location>
        <position position="49"/>
    </location>
    <ligand>
        <name>Zn(2+)</name>
        <dbReference type="ChEBI" id="CHEBI:29105"/>
    </ligand>
</feature>
<feature type="binding site" evidence="1">
    <location>
        <position position="153"/>
    </location>
    <ligand>
        <name>Zn(2+)</name>
        <dbReference type="ChEBI" id="CHEBI:29105"/>
    </ligand>
</feature>
<feature type="binding site" evidence="1">
    <location>
        <position position="157"/>
    </location>
    <ligand>
        <name>Zn(2+)</name>
        <dbReference type="ChEBI" id="CHEBI:29105"/>
    </ligand>
</feature>
<reference key="1">
    <citation type="journal article" date="2004" name="Proc. Natl. Acad. Sci. U.S.A.">
        <title>Insights into the evolution of Yersinia pestis through whole-genome comparison with Yersinia pseudotuberculosis.</title>
        <authorList>
            <person name="Chain P.S.G."/>
            <person name="Carniel E."/>
            <person name="Larimer F.W."/>
            <person name="Lamerdin J."/>
            <person name="Stoutland P.O."/>
            <person name="Regala W.M."/>
            <person name="Georgescu A.M."/>
            <person name="Vergez L.M."/>
            <person name="Land M.L."/>
            <person name="Motin V.L."/>
            <person name="Brubaker R.R."/>
            <person name="Fowler J."/>
            <person name="Hinnebusch J."/>
            <person name="Marceau M."/>
            <person name="Medigue C."/>
            <person name="Simonet M."/>
            <person name="Chenal-Francisque V."/>
            <person name="Souza B."/>
            <person name="Dacheux D."/>
            <person name="Elliott J.M."/>
            <person name="Derbise A."/>
            <person name="Hauser L.J."/>
            <person name="Garcia E."/>
        </authorList>
    </citation>
    <scope>NUCLEOTIDE SEQUENCE [LARGE SCALE GENOMIC DNA]</scope>
    <source>
        <strain>IP32953</strain>
    </source>
</reference>
<sequence length="300" mass="33396">MDPQYARWVKAAALSATALASILLIIKIFAWWHTGSVSLLAALVDSLVDLAASLTNLFVVRYSLQPADEEHTFGHGKAESLAALAQSMFISGSALFLFLTGFRHLASPEPLQDPSIGIGVTLVALFSTLILVTFQRWVVRKTHSQAIRADMLHYQSDVLMNGAILIALALSWYGFRRADALFALGIGVYILYSALRMGYEAVQSLLDRALPDDERQQIIDIVTSWPGVIGAHDLRTRRSGQTRFIQLHLEMEDMMPLMEAHVLAEQVEHALLYRFPGADVLIHQDPCSVVPKERHAHWEL</sequence>
<keyword id="KW-0997">Cell inner membrane</keyword>
<keyword id="KW-1003">Cell membrane</keyword>
<keyword id="KW-0406">Ion transport</keyword>
<keyword id="KW-0408">Iron</keyword>
<keyword id="KW-0410">Iron transport</keyword>
<keyword id="KW-0472">Membrane</keyword>
<keyword id="KW-0479">Metal-binding</keyword>
<keyword id="KW-0812">Transmembrane</keyword>
<keyword id="KW-1133">Transmembrane helix</keyword>
<keyword id="KW-0813">Transport</keyword>
<keyword id="KW-0862">Zinc</keyword>
<keyword id="KW-0864">Zinc transport</keyword>
<evidence type="ECO:0000255" key="1">
    <source>
        <dbReference type="HAMAP-Rule" id="MF_01425"/>
    </source>
</evidence>
<dbReference type="EMBL" id="BX936398">
    <property type="protein sequence ID" value="CAH19313.1"/>
    <property type="molecule type" value="Genomic_DNA"/>
</dbReference>
<dbReference type="RefSeq" id="WP_002208967.1">
    <property type="nucleotide sequence ID" value="NZ_CP009712.1"/>
</dbReference>
<dbReference type="SMR" id="Q66GA9"/>
<dbReference type="GeneID" id="57974515"/>
<dbReference type="KEGG" id="ypo:BZ17_2523"/>
<dbReference type="KEGG" id="yps:YPTB0073"/>
<dbReference type="PATRIC" id="fig|273123.14.peg.2646"/>
<dbReference type="Proteomes" id="UP000001011">
    <property type="component" value="Chromosome"/>
</dbReference>
<dbReference type="GO" id="GO:0005886">
    <property type="term" value="C:plasma membrane"/>
    <property type="evidence" value="ECO:0007669"/>
    <property type="project" value="UniProtKB-SubCell"/>
</dbReference>
<dbReference type="GO" id="GO:0015086">
    <property type="term" value="F:cadmium ion transmembrane transporter activity"/>
    <property type="evidence" value="ECO:0007669"/>
    <property type="project" value="UniProtKB-UniRule"/>
</dbReference>
<dbReference type="GO" id="GO:0015093">
    <property type="term" value="F:ferrous iron transmembrane transporter activity"/>
    <property type="evidence" value="ECO:0007669"/>
    <property type="project" value="TreeGrafter"/>
</dbReference>
<dbReference type="GO" id="GO:0046872">
    <property type="term" value="F:metal ion binding"/>
    <property type="evidence" value="ECO:0007669"/>
    <property type="project" value="UniProtKB-KW"/>
</dbReference>
<dbReference type="GO" id="GO:0015341">
    <property type="term" value="F:zinc efflux antiporter activity"/>
    <property type="evidence" value="ECO:0007669"/>
    <property type="project" value="TreeGrafter"/>
</dbReference>
<dbReference type="GO" id="GO:0006882">
    <property type="term" value="P:intracellular zinc ion homeostasis"/>
    <property type="evidence" value="ECO:0007669"/>
    <property type="project" value="TreeGrafter"/>
</dbReference>
<dbReference type="FunFam" id="1.20.1510.10:FF:000001">
    <property type="entry name" value="Ferrous-iron efflux pump FieF"/>
    <property type="match status" value="1"/>
</dbReference>
<dbReference type="FunFam" id="3.30.70.1350:FF:000002">
    <property type="entry name" value="Ferrous-iron efflux pump FieF"/>
    <property type="match status" value="1"/>
</dbReference>
<dbReference type="Gene3D" id="1.20.1510.10">
    <property type="entry name" value="Cation efflux protein transmembrane domain"/>
    <property type="match status" value="1"/>
</dbReference>
<dbReference type="Gene3D" id="3.30.70.1350">
    <property type="entry name" value="Cation efflux protein, cytoplasmic domain"/>
    <property type="match status" value="1"/>
</dbReference>
<dbReference type="HAMAP" id="MF_01425">
    <property type="entry name" value="Cation_efflux_FieF"/>
    <property type="match status" value="1"/>
</dbReference>
<dbReference type="InterPro" id="IPR002524">
    <property type="entry name" value="Cation_efflux"/>
</dbReference>
<dbReference type="InterPro" id="IPR027470">
    <property type="entry name" value="Cation_efflux_CTD"/>
</dbReference>
<dbReference type="InterPro" id="IPR036837">
    <property type="entry name" value="Cation_efflux_CTD_sf"/>
</dbReference>
<dbReference type="InterPro" id="IPR023783">
    <property type="entry name" value="Cation_efflux_FieF"/>
</dbReference>
<dbReference type="InterPro" id="IPR027469">
    <property type="entry name" value="Cation_efflux_TMD_sf"/>
</dbReference>
<dbReference type="InterPro" id="IPR050291">
    <property type="entry name" value="CDF_Transporter"/>
</dbReference>
<dbReference type="NCBIfam" id="TIGR01297">
    <property type="entry name" value="CDF"/>
    <property type="match status" value="1"/>
</dbReference>
<dbReference type="NCBIfam" id="NF007064">
    <property type="entry name" value="PRK09509.1"/>
    <property type="match status" value="1"/>
</dbReference>
<dbReference type="PANTHER" id="PTHR43840:SF41">
    <property type="entry name" value="CATION-EFFLUX PUMP FIEF"/>
    <property type="match status" value="1"/>
</dbReference>
<dbReference type="PANTHER" id="PTHR43840">
    <property type="entry name" value="MITOCHONDRIAL METAL TRANSPORTER 1-RELATED"/>
    <property type="match status" value="1"/>
</dbReference>
<dbReference type="Pfam" id="PF01545">
    <property type="entry name" value="Cation_efflux"/>
    <property type="match status" value="1"/>
</dbReference>
<dbReference type="Pfam" id="PF16916">
    <property type="entry name" value="ZT_dimer"/>
    <property type="match status" value="1"/>
</dbReference>
<dbReference type="SUPFAM" id="SSF160240">
    <property type="entry name" value="Cation efflux protein cytoplasmic domain-like"/>
    <property type="match status" value="1"/>
</dbReference>
<dbReference type="SUPFAM" id="SSF161111">
    <property type="entry name" value="Cation efflux protein transmembrane domain-like"/>
    <property type="match status" value="1"/>
</dbReference>
<proteinExistence type="inferred from homology"/>
<name>FIEF_YERPS</name>